<feature type="chain" id="PRO_0000372425" description="Chromatin assembly factor 1 subunit A">
    <location>
        <begin position="1"/>
        <end position="544"/>
    </location>
</feature>
<feature type="region of interest" description="Disordered" evidence="3">
    <location>
        <begin position="1"/>
        <end position="52"/>
    </location>
</feature>
<feature type="region of interest" description="Interaction with DNA and pcn1/PCNA" evidence="6">
    <location>
        <begin position="56"/>
        <end position="170"/>
    </location>
</feature>
<feature type="region of interest" description="Disordered" evidence="3">
    <location>
        <begin position="67"/>
        <end position="117"/>
    </location>
</feature>
<feature type="region of interest" description="Disordered" evidence="3">
    <location>
        <begin position="138"/>
        <end position="160"/>
    </location>
</feature>
<feature type="region of interest" description="Interaction with histones H3/H4" evidence="6">
    <location>
        <begin position="325"/>
        <end position="396"/>
    </location>
</feature>
<feature type="region of interest" description="Disordered" evidence="3">
    <location>
        <begin position="351"/>
        <end position="400"/>
    </location>
</feature>
<feature type="coiled-coil region" evidence="2">
    <location>
        <begin position="76"/>
        <end position="176"/>
    </location>
</feature>
<feature type="short sequence motif" description="PCNA-interaction protein (PIP box)" evidence="6">
    <location>
        <begin position="172"/>
        <end position="179"/>
    </location>
</feature>
<feature type="compositionally biased region" description="Polar residues" evidence="3">
    <location>
        <begin position="1"/>
        <end position="22"/>
    </location>
</feature>
<feature type="compositionally biased region" description="Low complexity" evidence="3">
    <location>
        <begin position="23"/>
        <end position="35"/>
    </location>
</feature>
<feature type="compositionally biased region" description="Polar residues" evidence="3">
    <location>
        <begin position="36"/>
        <end position="47"/>
    </location>
</feature>
<feature type="compositionally biased region" description="Basic and acidic residues" evidence="3">
    <location>
        <begin position="74"/>
        <end position="117"/>
    </location>
</feature>
<feature type="compositionally biased region" description="Acidic residues" evidence="3">
    <location>
        <begin position="351"/>
        <end position="388"/>
    </location>
</feature>
<feature type="mutagenesis site" description="Impairs DNA binding and interaction with pcn1/PCNA. Loss of histone chaperone activity." evidence="6">
    <original>RDQKLREKEEAQRLRQEQILNK</original>
    <variation>EDQELREEEEAQRLEQEQILNE</variation>
    <location>
        <begin position="147"/>
        <end position="168"/>
    </location>
</feature>
<feature type="mutagenesis site" description="Abolishes interaction with pcn1/PCNA. Abolishes histone chaperone activity." evidence="6">
    <original>QLKLNNFF</original>
    <variation>ALKANNAA</variation>
    <location>
        <begin position="172"/>
        <end position="179"/>
    </location>
</feature>
<feature type="mutagenesis site" description="Abolishes binding of the CAF-1 complex to histone H3/H4 dimers but increases binding to pcn1/PCNA. Loss of histone chaperone activity." evidence="6">
    <original>YTYDSEAEW</original>
    <variation>ATYDSEAEA</variation>
    <location>
        <begin position="340"/>
        <end position="348"/>
    </location>
</feature>
<accession>Q1MTN9</accession>
<dbReference type="EMBL" id="CU329671">
    <property type="protein sequence ID" value="CAB44771.2"/>
    <property type="molecule type" value="Genomic_DNA"/>
</dbReference>
<dbReference type="RefSeq" id="NP_596048.2">
    <property type="nucleotide sequence ID" value="NM_001021958.3"/>
</dbReference>
<dbReference type="SMR" id="Q1MTN9"/>
<dbReference type="BioGRID" id="277081">
    <property type="interactions" value="15"/>
</dbReference>
<dbReference type="ComplexPortal" id="CPX-25743">
    <property type="entry name" value="Chromatin assembly factor 1 complex"/>
</dbReference>
<dbReference type="DIP" id="DIP-38719N"/>
<dbReference type="FunCoup" id="Q1MTN9">
    <property type="interactions" value="78"/>
</dbReference>
<dbReference type="IntAct" id="Q1MTN9">
    <property type="interactions" value="4"/>
</dbReference>
<dbReference type="STRING" id="284812.Q1MTN9"/>
<dbReference type="iPTMnet" id="Q1MTN9"/>
<dbReference type="PaxDb" id="4896-SPBC29A10.03c.1"/>
<dbReference type="EnsemblFungi" id="SPBC29A10.03c.1">
    <property type="protein sequence ID" value="SPBC29A10.03c.1:pep"/>
    <property type="gene ID" value="SPBC29A10.03c"/>
</dbReference>
<dbReference type="GeneID" id="2540554"/>
<dbReference type="KEGG" id="spo:2540554"/>
<dbReference type="PomBase" id="SPBC29A10.03c"/>
<dbReference type="VEuPathDB" id="FungiDB:SPBC29A10.03c"/>
<dbReference type="eggNOG" id="KOG4363">
    <property type="taxonomic scope" value="Eukaryota"/>
</dbReference>
<dbReference type="HOGENOM" id="CLU_013392_1_0_1"/>
<dbReference type="InParanoid" id="Q1MTN9"/>
<dbReference type="OMA" id="YENVRPP"/>
<dbReference type="PhylomeDB" id="Q1MTN9"/>
<dbReference type="PRO" id="PR:Q1MTN9"/>
<dbReference type="Proteomes" id="UP000002485">
    <property type="component" value="Chromosome II"/>
</dbReference>
<dbReference type="GO" id="GO:0033186">
    <property type="term" value="C:CAF-1 complex"/>
    <property type="evidence" value="ECO:0000314"/>
    <property type="project" value="PomBase"/>
</dbReference>
<dbReference type="GO" id="GO:0000785">
    <property type="term" value="C:chromatin"/>
    <property type="evidence" value="ECO:0000314"/>
    <property type="project" value="PomBase"/>
</dbReference>
<dbReference type="GO" id="GO:0043596">
    <property type="term" value="C:nuclear replication fork"/>
    <property type="evidence" value="ECO:0000314"/>
    <property type="project" value="PomBase"/>
</dbReference>
<dbReference type="GO" id="GO:0005634">
    <property type="term" value="C:nucleus"/>
    <property type="evidence" value="ECO:0000314"/>
    <property type="project" value="PomBase"/>
</dbReference>
<dbReference type="GO" id="GO:0000510">
    <property type="term" value="F:H3-H4 histone complex chaperone activity"/>
    <property type="evidence" value="ECO:0000269"/>
    <property type="project" value="PomBase"/>
</dbReference>
<dbReference type="GO" id="GO:0006281">
    <property type="term" value="P:DNA repair"/>
    <property type="evidence" value="ECO:0007669"/>
    <property type="project" value="UniProtKB-KW"/>
</dbReference>
<dbReference type="GO" id="GO:0140861">
    <property type="term" value="P:DNA repair-dependent chromatin remodeling"/>
    <property type="evidence" value="ECO:0000305"/>
    <property type="project" value="PomBase"/>
</dbReference>
<dbReference type="GO" id="GO:0006335">
    <property type="term" value="P:DNA replication-dependent chromatin assembly"/>
    <property type="evidence" value="ECO:0000315"/>
    <property type="project" value="PomBase"/>
</dbReference>
<dbReference type="GO" id="GO:1990426">
    <property type="term" value="P:mitotic recombination-dependent replication fork processing"/>
    <property type="evidence" value="ECO:0000314"/>
    <property type="project" value="PomBase"/>
</dbReference>
<dbReference type="GO" id="GO:0006334">
    <property type="term" value="P:nucleosome assembly"/>
    <property type="evidence" value="ECO:0000318"/>
    <property type="project" value="GO_Central"/>
</dbReference>
<dbReference type="InterPro" id="IPR048800">
    <property type="entry name" value="Cac1-like_C"/>
</dbReference>
<dbReference type="InterPro" id="IPR022043">
    <property type="entry name" value="CAF1A_DD"/>
</dbReference>
<dbReference type="PANTHER" id="PTHR15272:SF0">
    <property type="entry name" value="CHROMATIN ASSEMBLY FACTOR 1 SUBUNIT A"/>
    <property type="match status" value="1"/>
</dbReference>
<dbReference type="PANTHER" id="PTHR15272">
    <property type="entry name" value="CHROMATIN ASSEMBLY FACTOR 1 SUBUNIT A CAF-1 SUBUNIT A"/>
    <property type="match status" value="1"/>
</dbReference>
<dbReference type="Pfam" id="PF21796">
    <property type="entry name" value="Cac1_C"/>
    <property type="match status" value="1"/>
</dbReference>
<dbReference type="Pfam" id="PF12253">
    <property type="entry name" value="CAF1A_dimeriz"/>
    <property type="match status" value="1"/>
</dbReference>
<protein>
    <recommendedName>
        <fullName evidence="1">Chromatin assembly factor 1 subunit A</fullName>
        <shortName evidence="1">CAF-1 subunit A</shortName>
    </recommendedName>
    <alternativeName>
        <fullName evidence="8">Pombe CAF-1 first subunit</fullName>
    </alternativeName>
</protein>
<gene>
    <name evidence="8" type="primary">pcf1</name>
    <name evidence="8" type="synonym">rlf2</name>
    <name type="ORF">SPBC29A10.03c</name>
</gene>
<reference key="1">
    <citation type="journal article" date="2002" name="Nature">
        <title>The genome sequence of Schizosaccharomyces pombe.</title>
        <authorList>
            <person name="Wood V."/>
            <person name="Gwilliam R."/>
            <person name="Rajandream M.A."/>
            <person name="Lyne M.H."/>
            <person name="Lyne R."/>
            <person name="Stewart A."/>
            <person name="Sgouros J.G."/>
            <person name="Peat N."/>
            <person name="Hayles J."/>
            <person name="Baker S.G."/>
            <person name="Basham D."/>
            <person name="Bowman S."/>
            <person name="Brooks K."/>
            <person name="Brown D."/>
            <person name="Brown S."/>
            <person name="Chillingworth T."/>
            <person name="Churcher C.M."/>
            <person name="Collins M."/>
            <person name="Connor R."/>
            <person name="Cronin A."/>
            <person name="Davis P."/>
            <person name="Feltwell T."/>
            <person name="Fraser A."/>
            <person name="Gentles S."/>
            <person name="Goble A."/>
            <person name="Hamlin N."/>
            <person name="Harris D.E."/>
            <person name="Hidalgo J."/>
            <person name="Hodgson G."/>
            <person name="Holroyd S."/>
            <person name="Hornsby T."/>
            <person name="Howarth S."/>
            <person name="Huckle E.J."/>
            <person name="Hunt S."/>
            <person name="Jagels K."/>
            <person name="James K.D."/>
            <person name="Jones L."/>
            <person name="Jones M."/>
            <person name="Leather S."/>
            <person name="McDonald S."/>
            <person name="McLean J."/>
            <person name="Mooney P."/>
            <person name="Moule S."/>
            <person name="Mungall K.L."/>
            <person name="Murphy L.D."/>
            <person name="Niblett D."/>
            <person name="Odell C."/>
            <person name="Oliver K."/>
            <person name="O'Neil S."/>
            <person name="Pearson D."/>
            <person name="Quail M.A."/>
            <person name="Rabbinowitsch E."/>
            <person name="Rutherford K.M."/>
            <person name="Rutter S."/>
            <person name="Saunders D."/>
            <person name="Seeger K."/>
            <person name="Sharp S."/>
            <person name="Skelton J."/>
            <person name="Simmonds M.N."/>
            <person name="Squares R."/>
            <person name="Squares S."/>
            <person name="Stevens K."/>
            <person name="Taylor K."/>
            <person name="Taylor R.G."/>
            <person name="Tivey A."/>
            <person name="Walsh S.V."/>
            <person name="Warren T."/>
            <person name="Whitehead S."/>
            <person name="Woodward J.R."/>
            <person name="Volckaert G."/>
            <person name="Aert R."/>
            <person name="Robben J."/>
            <person name="Grymonprez B."/>
            <person name="Weltjens I."/>
            <person name="Vanstreels E."/>
            <person name="Rieger M."/>
            <person name="Schaefer M."/>
            <person name="Mueller-Auer S."/>
            <person name="Gabel C."/>
            <person name="Fuchs M."/>
            <person name="Duesterhoeft A."/>
            <person name="Fritzc C."/>
            <person name="Holzer E."/>
            <person name="Moestl D."/>
            <person name="Hilbert H."/>
            <person name="Borzym K."/>
            <person name="Langer I."/>
            <person name="Beck A."/>
            <person name="Lehrach H."/>
            <person name="Reinhardt R."/>
            <person name="Pohl T.M."/>
            <person name="Eger P."/>
            <person name="Zimmermann W."/>
            <person name="Wedler H."/>
            <person name="Wambutt R."/>
            <person name="Purnelle B."/>
            <person name="Goffeau A."/>
            <person name="Cadieu E."/>
            <person name="Dreano S."/>
            <person name="Gloux S."/>
            <person name="Lelaure V."/>
            <person name="Mottier S."/>
            <person name="Galibert F."/>
            <person name="Aves S.J."/>
            <person name="Xiang Z."/>
            <person name="Hunt C."/>
            <person name="Moore K."/>
            <person name="Hurst S.M."/>
            <person name="Lucas M."/>
            <person name="Rochet M."/>
            <person name="Gaillardin C."/>
            <person name="Tallada V.A."/>
            <person name="Garzon A."/>
            <person name="Thode G."/>
            <person name="Daga R.R."/>
            <person name="Cruzado L."/>
            <person name="Jimenez J."/>
            <person name="Sanchez M."/>
            <person name="del Rey F."/>
            <person name="Benito J."/>
            <person name="Dominguez A."/>
            <person name="Revuelta J.L."/>
            <person name="Moreno S."/>
            <person name="Armstrong J."/>
            <person name="Forsburg S.L."/>
            <person name="Cerutti L."/>
            <person name="Lowe T."/>
            <person name="McCombie W.R."/>
            <person name="Paulsen I."/>
            <person name="Potashkin J."/>
            <person name="Shpakovski G.V."/>
            <person name="Ussery D."/>
            <person name="Barrell B.G."/>
            <person name="Nurse P."/>
        </authorList>
    </citation>
    <scope>NUCLEOTIDE SEQUENCE [LARGE SCALE GENOMIC DNA]</scope>
    <source>
        <strain>972 / ATCC 24843</strain>
    </source>
</reference>
<reference key="2">
    <citation type="journal article" date="2006" name="Nat. Biotechnol.">
        <title>ORFeome cloning and global analysis of protein localization in the fission yeast Schizosaccharomyces pombe.</title>
        <authorList>
            <person name="Matsuyama A."/>
            <person name="Arai R."/>
            <person name="Yashiroda Y."/>
            <person name="Shirai A."/>
            <person name="Kamata A."/>
            <person name="Sekido S."/>
            <person name="Kobayashi Y."/>
            <person name="Hashimoto A."/>
            <person name="Hamamoto M."/>
            <person name="Hiraoka Y."/>
            <person name="Horinouchi S."/>
            <person name="Yoshida M."/>
        </authorList>
    </citation>
    <scope>SUBCELLULAR LOCATION [LARGE SCALE ANALYSIS]</scope>
</reference>
<reference key="3">
    <citation type="journal article" date="2008" name="Genes Cells">
        <title>Fission yeast chromatin assembly factor 1 assists in the replication-coupled maintenance of heterochromatin.</title>
        <authorList>
            <person name="Dohke K."/>
            <person name="Miyazaki S."/>
            <person name="Tanaka K."/>
            <person name="Urano T."/>
            <person name="Grewal S.I."/>
            <person name="Murakami Y."/>
        </authorList>
    </citation>
    <scope>FUNCTION</scope>
    <scope>IDENTIFICATION IN THE CAF-1 COMPLEX</scope>
    <scope>INTERACTION WITH PCN1 AND SWI6</scope>
    <scope>SUBCELLULAR LOCATION</scope>
    <scope>DISRUPTION PHENOTYPE</scope>
</reference>
<reference key="4">
    <citation type="journal article" date="2024" name="Elife">
        <title>Disordered regions and folded modules in CAF-1 promote histone deposition in Schizosaccharomyces pombe.</title>
        <authorList>
            <person name="Ouasti F."/>
            <person name="Audin M."/>
            <person name="Freon K."/>
            <person name="Quivy J.P."/>
            <person name="Tachekort M."/>
            <person name="Cesard E."/>
            <person name="Thureau A."/>
            <person name="Ropars V."/>
            <person name="Fernandez Varela P."/>
            <person name="Moal G."/>
            <person name="Soumana-Amadou I."/>
            <person name="Uryga A."/>
            <person name="Legrand P."/>
            <person name="Andreani J."/>
            <person name="Guerois R."/>
            <person name="Almouzni G."/>
            <person name="Lambert S."/>
            <person name="Ochsenbein F."/>
        </authorList>
    </citation>
    <scope>FUNCTION</scope>
    <scope>IDENTIFICATION IN THE CAF-1 COMPLEX</scope>
    <scope>INTERACTION WITH PCN1 AND HISTONE H3-H4 DIMERS</scope>
    <scope>MOTIF PCNA-INTERACTION PROTEIN (PIP BOX)</scope>
    <scope>MUTAGENESIS OF 147-ARG--LYS-168; 172-GLN--PHE-179 AND 340-TYR--TRP-348</scope>
</reference>
<sequence>MNSESVDSDVAASTSNKGNELCSSSTDITSLSVSSPNESVIHSSHSASEADEYVCKLSYEGNRKKRIYNGSAEAGKEKKLQKQRAQEERIRQKEAERLKREKERQQREQEKKLREQEKIAAKKMKELEKLEKERIRLQEQQRRKEERDQKLREKEEAQRLRQEQILNKERQQLKLNNFFTKGVEKRIAPNENFVADKTDELNEFEKEFRPFFIKHQMSLSKYPSPNESDSFLDEVLSTSKSYPLKLNDIFTPSDAVSSANSLGVSNRNSENEVRQLMSAYQDPSVSKPQEILSCLSQIPIKFIFFYQDVRPPYFGSYTKTHSHGSNVLLNPWLEDEDIDYTYDSEAEWVADEEDDGEDLESEDEEVDNSDDIVEDGDNAFVDDEDDDKDSVNASNTHRSSGPLEVIVEGPVWDSKFLPDFNCLSLIEPISSFSASTYLQIDPKEDLWASQDTAPASSGMTIGPTSSLSDDLQVRFPSEDIPKFIEYVRNSHDNKVFLIENLRHMFPYVTKNIISETLGKVAVRKGKSVSDGWIIKENFASLLSS</sequence>
<name>CAF1A_SCHPO</name>
<keyword id="KW-0143">Chaperone</keyword>
<keyword id="KW-0156">Chromatin regulator</keyword>
<keyword id="KW-0175">Coiled coil</keyword>
<keyword id="KW-0227">DNA damage</keyword>
<keyword id="KW-0234">DNA repair</keyword>
<keyword id="KW-0235">DNA replication</keyword>
<keyword id="KW-0539">Nucleus</keyword>
<keyword id="KW-1185">Reference proteome</keyword>
<comment type="function">
    <text evidence="5 6">Acts as a component of the histone chaperone complex chromatin assembly factor 1 (CAF-1), which assembles histone octamers onto DNA during replication and repair (PubMed:38376141). CAF-1 performs the first step of the nucleosome assembly process, bringing newly synthesized histones H3 and H4 to replicating DNA; histones H2A/H2B can bind to this chromatin precursor subsequent to DNA replication to complete the histone octamer (PubMed:38376141). Plays a role in the maintenance of heterochromatin (PubMed:18761674).</text>
</comment>
<comment type="subunit">
    <text evidence="5 6">Component of chromatin assembly factor 1 (CAF-1), composed of pcf1, pcf2 and pcf3 (PubMed:18761674, PubMed:38376141). Interacts (via PIP motif) with pcn1/PCNA; the interaction is direct and occurs during S-phase (PubMed:18761674, PubMed:38376141). Interacts with swi6 at the G1/S-phase transition and early S-phase, but not in the G2 phase (PubMed:18761674). The CAF-1 complex interacts with histone H3/H4 dimers (PubMed:38376141).</text>
</comment>
<comment type="interaction">
    <interactant intactId="EBI-1560762">
        <id>Q1MTN9</id>
    </interactant>
    <interactant intactId="EBI-768724">
        <id>Q03392</id>
        <label>pcn1</label>
    </interactant>
    <organismsDiffer>false</organismsDiffer>
    <experiments>4</experiments>
</comment>
<comment type="interaction">
    <interactant intactId="EBI-1560762">
        <id>Q1MTN9</id>
    </interactant>
    <interactant intactId="EBI-16123749">
        <id>O13985</id>
        <label>SPAC26H5.03</label>
    </interactant>
    <organismsDiffer>false</organismsDiffer>
    <experiments>2</experiments>
</comment>
<comment type="subcellular location">
    <subcellularLocation>
        <location evidence="4 5">Nucleus</location>
    </subcellularLocation>
    <text evidence="5">Localizes to replicating chromatin.</text>
</comment>
<comment type="domain">
    <text evidence="6">The region N-terminal to the PCNA-interaction protein motif (PIP box) also contributes to binding of pcn1/PCNA.</text>
</comment>
<comment type="disruption phenotype">
    <text evidence="5">Viable vegetative cells but sporulation is inhibited (PubMed:18761674). Decreases the level of pcf3 protein and decreases nuclear localization of pcf2 (PubMed:18761674). Abnormal heterochromatin organization at the peri-centromeric and mating-type regions; heterochromatin formation in the sub-telomeric region appears normal (PubMed:18761674).</text>
</comment>
<comment type="similarity">
    <text evidence="7">Belongs to the RLF2 family.</text>
</comment>
<proteinExistence type="evidence at protein level"/>
<evidence type="ECO:0000250" key="1">
    <source>
        <dbReference type="UniProtKB" id="Q13111"/>
    </source>
</evidence>
<evidence type="ECO:0000255" key="2"/>
<evidence type="ECO:0000256" key="3">
    <source>
        <dbReference type="SAM" id="MobiDB-lite"/>
    </source>
</evidence>
<evidence type="ECO:0000269" key="4">
    <source>
    </source>
</evidence>
<evidence type="ECO:0000269" key="5">
    <source>
    </source>
</evidence>
<evidence type="ECO:0000269" key="6">
    <source>
    </source>
</evidence>
<evidence type="ECO:0000305" key="7"/>
<evidence type="ECO:0000312" key="8">
    <source>
        <dbReference type="PomBase" id="SPBC29A10.03c"/>
    </source>
</evidence>
<organism>
    <name type="scientific">Schizosaccharomyces pombe (strain 972 / ATCC 24843)</name>
    <name type="common">Fission yeast</name>
    <dbReference type="NCBI Taxonomy" id="284812"/>
    <lineage>
        <taxon>Eukaryota</taxon>
        <taxon>Fungi</taxon>
        <taxon>Dikarya</taxon>
        <taxon>Ascomycota</taxon>
        <taxon>Taphrinomycotina</taxon>
        <taxon>Schizosaccharomycetes</taxon>
        <taxon>Schizosaccharomycetales</taxon>
        <taxon>Schizosaccharomycetaceae</taxon>
        <taxon>Schizosaccharomyces</taxon>
    </lineage>
</organism>